<protein>
    <recommendedName>
        <fullName>Isochorismate synthase 1, chloroplastic</fullName>
        <shortName evidence="7">AtIcs1</shortName>
        <shortName>IcsI</shortName>
        <ecNumber evidence="3 5">5.4.4.2</ecNumber>
    </recommendedName>
    <alternativeName>
        <fullName>Enhanced disease susceptibility 16</fullName>
        <shortName>Eds16</shortName>
    </alternativeName>
    <alternativeName>
        <fullName>Isochorismate mutase 1</fullName>
    </alternativeName>
    <alternativeName>
        <fullName>Salicylic acid induction deficient 2</fullName>
        <shortName>Sid2</shortName>
    </alternativeName>
    <alternativeName>
        <fullName>menF-like protein 1</fullName>
    </alternativeName>
</protein>
<organism>
    <name type="scientific">Arabidopsis thaliana</name>
    <name type="common">Mouse-ear cress</name>
    <dbReference type="NCBI Taxonomy" id="3702"/>
    <lineage>
        <taxon>Eukaryota</taxon>
        <taxon>Viridiplantae</taxon>
        <taxon>Streptophyta</taxon>
        <taxon>Embryophyta</taxon>
        <taxon>Tracheophyta</taxon>
        <taxon>Spermatophyta</taxon>
        <taxon>Magnoliopsida</taxon>
        <taxon>eudicotyledons</taxon>
        <taxon>Gunneridae</taxon>
        <taxon>Pentapetalae</taxon>
        <taxon>rosids</taxon>
        <taxon>malvids</taxon>
        <taxon>Brassicales</taxon>
        <taxon>Brassicaceae</taxon>
        <taxon>Camelineae</taxon>
        <taxon>Arabidopsis</taxon>
    </lineage>
</organism>
<accession>Q9S7H8</accession>
<accession>O81522</accession>
<accession>Q3ECD2</accession>
<accession>Q9ASQ4</accession>
<gene>
    <name type="primary">ICS1</name>
    <name type="ordered locus">At1g74710</name>
    <name type="ORF">F1M20.39</name>
    <name type="ORF">F25A4.31</name>
</gene>
<reference key="1">
    <citation type="online journal article" date="1998" name="Plant Gene Register">
        <title>Cloning of a plant isochorismate synthase.</title>
        <authorList>
            <person name="Meng H."/>
            <person name="Pullman G.S."/>
            <person name="Peter G.F."/>
        </authorList>
        <locator>PGR98-214</locator>
    </citation>
    <scope>NUCLEOTIDE SEQUENCE [MRNA] (ISOFORM 1)</scope>
</reference>
<reference key="2">
    <citation type="journal article" date="2001" name="Nature">
        <title>Isochorismate synthase is required to synthesize salicylic acid for plant defence.</title>
        <authorList>
            <person name="Wildermuth M.C."/>
            <person name="Dewdney J."/>
            <person name="Wu G."/>
            <person name="Ausubel F.M."/>
        </authorList>
    </citation>
    <scope>NUCLEOTIDE SEQUENCE [MRNA] (ISOFORM 1)</scope>
    <scope>FUNCTION</scope>
    <scope>CATALYTIC ACTIVITY</scope>
    <source>
        <tissue>Leaf</tissue>
    </source>
</reference>
<reference key="3">
    <citation type="journal article" date="2000" name="Nature">
        <title>Sequence and analysis of chromosome 1 of the plant Arabidopsis thaliana.</title>
        <authorList>
            <person name="Theologis A."/>
            <person name="Ecker J.R."/>
            <person name="Palm C.J."/>
            <person name="Federspiel N.A."/>
            <person name="Kaul S."/>
            <person name="White O."/>
            <person name="Alonso J."/>
            <person name="Altafi H."/>
            <person name="Araujo R."/>
            <person name="Bowman C.L."/>
            <person name="Brooks S.Y."/>
            <person name="Buehler E."/>
            <person name="Chan A."/>
            <person name="Chao Q."/>
            <person name="Chen H."/>
            <person name="Cheuk R.F."/>
            <person name="Chin C.W."/>
            <person name="Chung M.K."/>
            <person name="Conn L."/>
            <person name="Conway A.B."/>
            <person name="Conway A.R."/>
            <person name="Creasy T.H."/>
            <person name="Dewar K."/>
            <person name="Dunn P."/>
            <person name="Etgu P."/>
            <person name="Feldblyum T.V."/>
            <person name="Feng J.-D."/>
            <person name="Fong B."/>
            <person name="Fujii C.Y."/>
            <person name="Gill J.E."/>
            <person name="Goldsmith A.D."/>
            <person name="Haas B."/>
            <person name="Hansen N.F."/>
            <person name="Hughes B."/>
            <person name="Huizar L."/>
            <person name="Hunter J.L."/>
            <person name="Jenkins J."/>
            <person name="Johnson-Hopson C."/>
            <person name="Khan S."/>
            <person name="Khaykin E."/>
            <person name="Kim C.J."/>
            <person name="Koo H.L."/>
            <person name="Kremenetskaia I."/>
            <person name="Kurtz D.B."/>
            <person name="Kwan A."/>
            <person name="Lam B."/>
            <person name="Langin-Hooper S."/>
            <person name="Lee A."/>
            <person name="Lee J.M."/>
            <person name="Lenz C.A."/>
            <person name="Li J.H."/>
            <person name="Li Y.-P."/>
            <person name="Lin X."/>
            <person name="Liu S.X."/>
            <person name="Liu Z.A."/>
            <person name="Luros J.S."/>
            <person name="Maiti R."/>
            <person name="Marziali A."/>
            <person name="Militscher J."/>
            <person name="Miranda M."/>
            <person name="Nguyen M."/>
            <person name="Nierman W.C."/>
            <person name="Osborne B.I."/>
            <person name="Pai G."/>
            <person name="Peterson J."/>
            <person name="Pham P.K."/>
            <person name="Rizzo M."/>
            <person name="Rooney T."/>
            <person name="Rowley D."/>
            <person name="Sakano H."/>
            <person name="Salzberg S.L."/>
            <person name="Schwartz J.R."/>
            <person name="Shinn P."/>
            <person name="Southwick A.M."/>
            <person name="Sun H."/>
            <person name="Tallon L.J."/>
            <person name="Tambunga G."/>
            <person name="Toriumi M.J."/>
            <person name="Town C.D."/>
            <person name="Utterback T."/>
            <person name="Van Aken S."/>
            <person name="Vaysberg M."/>
            <person name="Vysotskaia V.S."/>
            <person name="Walker M."/>
            <person name="Wu D."/>
            <person name="Yu G."/>
            <person name="Fraser C.M."/>
            <person name="Venter J.C."/>
            <person name="Davis R.W."/>
        </authorList>
    </citation>
    <scope>NUCLEOTIDE SEQUENCE [LARGE SCALE GENOMIC DNA]</scope>
    <source>
        <strain>cv. Columbia</strain>
    </source>
</reference>
<reference key="4">
    <citation type="journal article" date="2017" name="Plant J.">
        <title>Araport11: a complete reannotation of the Arabidopsis thaliana reference genome.</title>
        <authorList>
            <person name="Cheng C.Y."/>
            <person name="Krishnakumar V."/>
            <person name="Chan A.P."/>
            <person name="Thibaud-Nissen F."/>
            <person name="Schobel S."/>
            <person name="Town C.D."/>
        </authorList>
    </citation>
    <scope>GENOME REANNOTATION</scope>
    <source>
        <strain>cv. Columbia</strain>
    </source>
</reference>
<reference key="5">
    <citation type="journal article" date="2003" name="Science">
        <title>Empirical analysis of transcriptional activity in the Arabidopsis genome.</title>
        <authorList>
            <person name="Yamada K."/>
            <person name="Lim J."/>
            <person name="Dale J.M."/>
            <person name="Chen H."/>
            <person name="Shinn P."/>
            <person name="Palm C.J."/>
            <person name="Southwick A.M."/>
            <person name="Wu H.C."/>
            <person name="Kim C.J."/>
            <person name="Nguyen M."/>
            <person name="Pham P.K."/>
            <person name="Cheuk R.F."/>
            <person name="Karlin-Newmann G."/>
            <person name="Liu S.X."/>
            <person name="Lam B."/>
            <person name="Sakano H."/>
            <person name="Wu T."/>
            <person name="Yu G."/>
            <person name="Miranda M."/>
            <person name="Quach H.L."/>
            <person name="Tripp M."/>
            <person name="Chang C.H."/>
            <person name="Lee J.M."/>
            <person name="Toriumi M.J."/>
            <person name="Chan M.M."/>
            <person name="Tang C.C."/>
            <person name="Onodera C.S."/>
            <person name="Deng J.M."/>
            <person name="Akiyama K."/>
            <person name="Ansari Y."/>
            <person name="Arakawa T."/>
            <person name="Banh J."/>
            <person name="Banno F."/>
            <person name="Bowser L."/>
            <person name="Brooks S.Y."/>
            <person name="Carninci P."/>
            <person name="Chao Q."/>
            <person name="Choy N."/>
            <person name="Enju A."/>
            <person name="Goldsmith A.D."/>
            <person name="Gurjal M."/>
            <person name="Hansen N.F."/>
            <person name="Hayashizaki Y."/>
            <person name="Johnson-Hopson C."/>
            <person name="Hsuan V.W."/>
            <person name="Iida K."/>
            <person name="Karnes M."/>
            <person name="Khan S."/>
            <person name="Koesema E."/>
            <person name="Ishida J."/>
            <person name="Jiang P.X."/>
            <person name="Jones T."/>
            <person name="Kawai J."/>
            <person name="Kamiya A."/>
            <person name="Meyers C."/>
            <person name="Nakajima M."/>
            <person name="Narusaka M."/>
            <person name="Seki M."/>
            <person name="Sakurai T."/>
            <person name="Satou M."/>
            <person name="Tamse R."/>
            <person name="Vaysberg M."/>
            <person name="Wallender E.K."/>
            <person name="Wong C."/>
            <person name="Yamamura Y."/>
            <person name="Yuan S."/>
            <person name="Shinozaki K."/>
            <person name="Davis R.W."/>
            <person name="Theologis A."/>
            <person name="Ecker J.R."/>
        </authorList>
    </citation>
    <scope>NUCLEOTIDE SEQUENCE [LARGE SCALE MRNA] (ISOFORM 1)</scope>
    <source>
        <strain>cv. Columbia</strain>
    </source>
</reference>
<reference key="6">
    <citation type="journal article" date="1999" name="Plant Cell">
        <title>Salicylic acid induction-deficient mutants of Arabidopsis express PR-2 and PR-5 and accumulate high levels of camalexin after pathogen inoculation.</title>
        <authorList>
            <person name="Nawrath C."/>
            <person name="Metraux J.P."/>
        </authorList>
    </citation>
    <scope>FUNCTION</scope>
</reference>
<reference key="7">
    <citation type="journal article" date="2006" name="J. Biol. Chem.">
        <title>A plant locus essential for phylloquinone (vitamin K1) biosynthesis originated from a fusion of four eubacterial genes.</title>
        <authorList>
            <person name="Gross J."/>
            <person name="Cho W.K."/>
            <person name="Lezhneva L."/>
            <person name="Falk J."/>
            <person name="Krupinska K."/>
            <person name="Shinozaki K."/>
            <person name="Seki M."/>
            <person name="Herrmann R.G."/>
            <person name="Meurer J."/>
        </authorList>
    </citation>
    <scope>FUNCTION</scope>
    <scope>DISRUPTION PHENOTYPE</scope>
</reference>
<reference key="8">
    <citation type="journal article" date="2007" name="J. Biol. Chem.">
        <title>Arabidopsis isochorismate synthase functional in pathogen-induced salicylate biosynthesis exhibits properties consistent with a role in diverse stress responses.</title>
        <authorList>
            <person name="Strawn M.A."/>
            <person name="Marr S.K."/>
            <person name="Inoue K."/>
            <person name="Inada N."/>
            <person name="Zubieta C."/>
            <person name="Wildermuth M.C."/>
        </authorList>
    </citation>
    <scope>FUNCTION</scope>
    <scope>CATALYTIC ACTIVITY</scope>
    <scope>SUBCELLULAR LOCATION</scope>
    <scope>SUBUNIT</scope>
    <scope>BIOPHYSICOCHEMICAL PROPERTIES</scope>
    <scope>INDUCTION</scope>
    <scope>ACTIVITY REGULATION</scope>
</reference>
<reference key="9">
    <citation type="journal article" date="2008" name="Plant Physiol.">
        <title>Characterization and biological function of the ISOCHORISMATE SYNTHASE2 gene of Arabidopsis.</title>
        <authorList>
            <person name="Garcion C."/>
            <person name="Lohmann A."/>
            <person name="Lamodiere E."/>
            <person name="Catinot J."/>
            <person name="Buchala A."/>
            <person name="Doermann P."/>
            <person name="Metraux J.-P."/>
        </authorList>
    </citation>
    <scope>FUNCTION</scope>
    <scope>SUBCELLULAR LOCATION</scope>
    <scope>DISRUPTION PHENOTYPE</scope>
</reference>
<dbReference type="EC" id="5.4.4.2" evidence="3 5"/>
<dbReference type="EMBL" id="AF078080">
    <property type="protein sequence ID" value="AAC97926.1"/>
    <property type="status" value="ALT_INIT"/>
    <property type="molecule type" value="mRNA"/>
</dbReference>
<dbReference type="EMBL" id="AY056055">
    <property type="protein sequence ID" value="AAL17715.1"/>
    <property type="molecule type" value="mRNA"/>
</dbReference>
<dbReference type="EMBL" id="AC008263">
    <property type="protein sequence ID" value="AAD55272.1"/>
    <property type="status" value="ALT_SEQ"/>
    <property type="molecule type" value="Genomic_DNA"/>
</dbReference>
<dbReference type="EMBL" id="AC011765">
    <property type="protein sequence ID" value="AAG52358.1"/>
    <property type="status" value="ALT_SEQ"/>
    <property type="molecule type" value="Genomic_DNA"/>
</dbReference>
<dbReference type="EMBL" id="CP002684">
    <property type="protein sequence ID" value="AEE35624.1"/>
    <property type="molecule type" value="Genomic_DNA"/>
</dbReference>
<dbReference type="EMBL" id="CP002684">
    <property type="protein sequence ID" value="AEE35625.1"/>
    <property type="molecule type" value="Genomic_DNA"/>
</dbReference>
<dbReference type="EMBL" id="AF367342">
    <property type="protein sequence ID" value="AAK32929.1"/>
    <property type="molecule type" value="mRNA"/>
</dbReference>
<dbReference type="EMBL" id="AY124864">
    <property type="protein sequence ID" value="AAM70573.1"/>
    <property type="molecule type" value="mRNA"/>
</dbReference>
<dbReference type="PIR" id="D96776">
    <property type="entry name" value="D96776"/>
</dbReference>
<dbReference type="PIR" id="T51711">
    <property type="entry name" value="T51711"/>
</dbReference>
<dbReference type="RefSeq" id="NP_565090.1">
    <molecule id="Q9S7H8-1"/>
    <property type="nucleotide sequence ID" value="NM_106129.4"/>
</dbReference>
<dbReference type="RefSeq" id="NP_974143.1">
    <molecule id="Q9S7H8-2"/>
    <property type="nucleotide sequence ID" value="NM_202414.1"/>
</dbReference>
<dbReference type="PDB" id="8W6V">
    <property type="method" value="X-ray"/>
    <property type="resolution" value="1.80 A"/>
    <property type="chains" value="A/B=46-569"/>
</dbReference>
<dbReference type="PDB" id="8W71">
    <property type="method" value="X-ray"/>
    <property type="resolution" value="2.12 A"/>
    <property type="chains" value="A/B=46-569"/>
</dbReference>
<dbReference type="PDBsum" id="8W6V"/>
<dbReference type="PDBsum" id="8W71"/>
<dbReference type="SMR" id="Q9S7H8"/>
<dbReference type="FunCoup" id="Q9S7H8">
    <property type="interactions" value="238"/>
</dbReference>
<dbReference type="STRING" id="3702.Q9S7H8"/>
<dbReference type="SwissLipids" id="SLP:000001506"/>
<dbReference type="GlyGen" id="Q9S7H8">
    <property type="glycosylation" value="1 site"/>
</dbReference>
<dbReference type="PaxDb" id="3702-AT1G74710.2"/>
<dbReference type="ProteomicsDB" id="228772">
    <molecule id="Q9S7H8-1"/>
</dbReference>
<dbReference type="EnsemblPlants" id="AT1G74710.1">
    <molecule id="Q9S7H8-1"/>
    <property type="protein sequence ID" value="AT1G74710.1"/>
    <property type="gene ID" value="AT1G74710"/>
</dbReference>
<dbReference type="EnsemblPlants" id="AT1G74710.2">
    <molecule id="Q9S7H8-2"/>
    <property type="protein sequence ID" value="AT1G74710.2"/>
    <property type="gene ID" value="AT1G74710"/>
</dbReference>
<dbReference type="GeneID" id="843810"/>
<dbReference type="Gramene" id="AT1G74710.1">
    <molecule id="Q9S7H8-1"/>
    <property type="protein sequence ID" value="AT1G74710.1"/>
    <property type="gene ID" value="AT1G74710"/>
</dbReference>
<dbReference type="Gramene" id="AT1G74710.2">
    <molecule id="Q9S7H8-2"/>
    <property type="protein sequence ID" value="AT1G74710.2"/>
    <property type="gene ID" value="AT1G74710"/>
</dbReference>
<dbReference type="KEGG" id="ath:AT1G74710"/>
<dbReference type="Araport" id="AT1G74710"/>
<dbReference type="TAIR" id="AT1G74710">
    <property type="gene designation" value="EDS16"/>
</dbReference>
<dbReference type="eggNOG" id="KOG1223">
    <property type="taxonomic scope" value="Eukaryota"/>
</dbReference>
<dbReference type="HOGENOM" id="CLU_006493_8_3_1"/>
<dbReference type="InParanoid" id="Q9S7H8"/>
<dbReference type="OMA" id="AQDEIQP"/>
<dbReference type="PhylomeDB" id="Q9S7H8"/>
<dbReference type="BioCyc" id="ARA:AT1G74710-MONOMER"/>
<dbReference type="BioCyc" id="MetaCyc:AT1G74710-MONOMER"/>
<dbReference type="BRENDA" id="5.4.4.2">
    <property type="organism ID" value="399"/>
</dbReference>
<dbReference type="SABIO-RK" id="Q9S7H8"/>
<dbReference type="UniPathway" id="UPA00025"/>
<dbReference type="PRO" id="PR:Q9S7H8"/>
<dbReference type="Proteomes" id="UP000006548">
    <property type="component" value="Chromosome 1"/>
</dbReference>
<dbReference type="ExpressionAtlas" id="Q9S7H8">
    <property type="expression patterns" value="baseline and differential"/>
</dbReference>
<dbReference type="GO" id="GO:0009507">
    <property type="term" value="C:chloroplast"/>
    <property type="evidence" value="ECO:0007669"/>
    <property type="project" value="UniProtKB-SubCell"/>
</dbReference>
<dbReference type="GO" id="GO:0009536">
    <property type="term" value="C:plastid"/>
    <property type="evidence" value="ECO:0000314"/>
    <property type="project" value="TAIR"/>
</dbReference>
<dbReference type="GO" id="GO:0008909">
    <property type="term" value="F:isochorismate synthase activity"/>
    <property type="evidence" value="ECO:0000315"/>
    <property type="project" value="TAIR"/>
</dbReference>
<dbReference type="GO" id="GO:0042742">
    <property type="term" value="P:defense response to bacterium"/>
    <property type="evidence" value="ECO:0000315"/>
    <property type="project" value="TAIR"/>
</dbReference>
<dbReference type="GO" id="GO:0050832">
    <property type="term" value="P:defense response to fungus"/>
    <property type="evidence" value="ECO:0000315"/>
    <property type="project" value="TAIR"/>
</dbReference>
<dbReference type="GO" id="GO:0050829">
    <property type="term" value="P:defense response to Gram-negative bacterium"/>
    <property type="evidence" value="ECO:0000315"/>
    <property type="project" value="TAIR"/>
</dbReference>
<dbReference type="GO" id="GO:0060866">
    <property type="term" value="P:leaf abscission"/>
    <property type="evidence" value="ECO:0000315"/>
    <property type="project" value="TAIR"/>
</dbReference>
<dbReference type="GO" id="GO:0031348">
    <property type="term" value="P:negative regulation of defense response"/>
    <property type="evidence" value="ECO:0000315"/>
    <property type="project" value="TAIR"/>
</dbReference>
<dbReference type="GO" id="GO:0042372">
    <property type="term" value="P:phylloquinone biosynthetic process"/>
    <property type="evidence" value="ECO:0000315"/>
    <property type="project" value="TAIR"/>
</dbReference>
<dbReference type="GO" id="GO:0009617">
    <property type="term" value="P:response to bacterium"/>
    <property type="evidence" value="ECO:0000315"/>
    <property type="project" value="TAIR"/>
</dbReference>
<dbReference type="GO" id="GO:0009409">
    <property type="term" value="P:response to cold"/>
    <property type="evidence" value="ECO:0000315"/>
    <property type="project" value="TAIR"/>
</dbReference>
<dbReference type="GO" id="GO:0009697">
    <property type="term" value="P:salicylic acid biosynthetic process"/>
    <property type="evidence" value="ECO:0000304"/>
    <property type="project" value="TAIR"/>
</dbReference>
<dbReference type="GO" id="GO:0010118">
    <property type="term" value="P:stomatal movement"/>
    <property type="evidence" value="ECO:0000315"/>
    <property type="project" value="TAIR"/>
</dbReference>
<dbReference type="GO" id="GO:0009627">
    <property type="term" value="P:systemic acquired resistance"/>
    <property type="evidence" value="ECO:0000270"/>
    <property type="project" value="TAIR"/>
</dbReference>
<dbReference type="FunFam" id="3.60.120.10:FF:000005">
    <property type="entry name" value="isochorismate synthase, chloroplastic-like isoform X1"/>
    <property type="match status" value="1"/>
</dbReference>
<dbReference type="Gene3D" id="3.60.120.10">
    <property type="entry name" value="Anthranilate synthase"/>
    <property type="match status" value="1"/>
</dbReference>
<dbReference type="InterPro" id="IPR005801">
    <property type="entry name" value="ADC_synthase"/>
</dbReference>
<dbReference type="InterPro" id="IPR015890">
    <property type="entry name" value="Chorismate_C"/>
</dbReference>
<dbReference type="InterPro" id="IPR004561">
    <property type="entry name" value="IsoChor_synthase"/>
</dbReference>
<dbReference type="InterPro" id="IPR044250">
    <property type="entry name" value="MenF-like"/>
</dbReference>
<dbReference type="NCBIfam" id="TIGR00543">
    <property type="entry name" value="isochor_syn"/>
    <property type="match status" value="1"/>
</dbReference>
<dbReference type="PANTHER" id="PTHR47253">
    <property type="match status" value="1"/>
</dbReference>
<dbReference type="PANTHER" id="PTHR47253:SF8">
    <property type="entry name" value="ISOCHORISMATE SYNTHASE 1, CHLOROPLASTIC"/>
    <property type="match status" value="1"/>
</dbReference>
<dbReference type="Pfam" id="PF00425">
    <property type="entry name" value="Chorismate_bind"/>
    <property type="match status" value="1"/>
</dbReference>
<dbReference type="SUPFAM" id="SSF56322">
    <property type="entry name" value="ADC synthase"/>
    <property type="match status" value="1"/>
</dbReference>
<comment type="function">
    <text evidence="2 3 4 5 6">Isochorismate synthase involved in the synthesis of salicylic acid (SA) required for both local and systemic acquired resistance (LAR and SAR) while SA synthesized through the phenylalanine ammonium lyase (PAL) pathway seems to potentiate plant cell death. Also involved in phylloquinone (vitamin K1) synthesis. Has no isochorismate pyruvate lyase (IPL) activity.</text>
</comment>
<comment type="catalytic activity">
    <reaction evidence="3 5">
        <text>chorismate = isochorismate</text>
        <dbReference type="Rhea" id="RHEA:18985"/>
        <dbReference type="ChEBI" id="CHEBI:29748"/>
        <dbReference type="ChEBI" id="CHEBI:29780"/>
        <dbReference type="EC" id="5.4.4.2"/>
    </reaction>
</comment>
<comment type="cofactor">
    <cofactor>
        <name>Mg(2+)</name>
        <dbReference type="ChEBI" id="CHEBI:18420"/>
    </cofactor>
</comment>
<comment type="biophysicochemical properties">
    <kinetics>
        <KM evidence="5">41.5 uM for chorismate</KM>
        <KM evidence="5">193 uM for magnesium</KM>
    </kinetics>
    <phDependence>
        <text evidence="5">Optimum pH is 7.5-8.</text>
    </phDependence>
    <temperatureDependence>
        <text evidence="5">Optimum temperature is 23 degrees Celsius. 90% of maximal activity from 4 to 37 degrees Celsius.</text>
    </temperatureDependence>
</comment>
<comment type="pathway">
    <text>Siderophore biosynthesis; salicylate biosynthesis.</text>
</comment>
<comment type="subunit">
    <text evidence="5">Monomer.</text>
</comment>
<comment type="subcellular location">
    <subcellularLocation>
        <location evidence="5 6">Plastid</location>
        <location evidence="5 6">Chloroplast</location>
    </subcellularLocation>
</comment>
<comment type="alternative products">
    <event type="alternative splicing"/>
    <isoform>
        <id>Q9S7H8-1</id>
        <name>1</name>
        <sequence type="displayed"/>
    </isoform>
    <isoform>
        <id>Q9S7H8-2</id>
        <name>2</name>
        <sequence type="described" ref="VSP_034699"/>
    </isoform>
</comment>
<comment type="tissue specificity">
    <text>Leaves.</text>
</comment>
<comment type="induction">
    <text evidence="5">By pathogen infection. Systemic induction during systemic acquired resistance (SAR). Not induced by light.</text>
</comment>
<comment type="disruption phenotype">
    <text evidence="4 6">No visible phenotype; due to the redundancy with ICS2. Nevertheless salicylic acid accumulation upon induction is severely impaired. Ics1 and ics2 double mutant is seedling lethal due to photosynthetic lesions induced by the lack of phylloquinone.</text>
</comment>
<comment type="similarity">
    <text evidence="8">Belongs to the isochorismate synthase family.</text>
</comment>
<comment type="sequence caution" evidence="8">
    <conflict type="erroneous initiation">
        <sequence resource="EMBL-CDS" id="AAC97926"/>
    </conflict>
    <text>Truncated N-terminus.</text>
</comment>
<comment type="sequence caution" evidence="8">
    <conflict type="erroneous gene model prediction">
        <sequence resource="EMBL-CDS" id="AAD55272"/>
    </conflict>
</comment>
<comment type="sequence caution" evidence="8">
    <conflict type="erroneous gene model prediction">
        <sequence resource="EMBL-CDS" id="AAG52358"/>
    </conflict>
</comment>
<keyword id="KW-0002">3D-structure</keyword>
<keyword id="KW-0025">Alternative splicing</keyword>
<keyword id="KW-0150">Chloroplast</keyword>
<keyword id="KW-0413">Isomerase</keyword>
<keyword id="KW-0460">Magnesium</keyword>
<keyword id="KW-0611">Plant defense</keyword>
<keyword id="KW-0934">Plastid</keyword>
<keyword id="KW-1185">Reference proteome</keyword>
<keyword id="KW-0809">Transit peptide</keyword>
<proteinExistence type="evidence at protein level"/>
<sequence>MASLQFSSQFLGSNTKTHSSIISISRSYSPTPFTRFSRKKYESCSMSMNGCDGDFKTPLGTVETRTMTAVLSPAAATERLISAVSELKSQPPSFSSGVVRLQVPIDQQIGAIDWLQAQNEIQPRCFFSRRSDVGRPDLLLDLANENGNGNGNGTVSSDRNLVSVAGIGSAVFFRDLDPFSHDDWRSIRRFLSSTSPLIRAYGGMRFDPNGKIAVEWEPFGAFYFSVPQVEFNEFGGSSMLAATIAWDDELSWTLENAIEALQETMLQVSSVVMKLRNRSLGVSVLSKNHVPTKGAYFPAVEKALEMINQKSSPLNKVVLARNSRIITDTDIDPIAWLAQLQREGHDAYQFCLQPPGAPAFIGNTPERLFQRTQLGVCSEALAATRPRAASSARDMEIERDLLTSPKDDLEFSIVRENIREKLNGICDRVVVKPQKTVRKLARVQHLYSQLAGRLTKEDDEYKILAALHPTPAVCGLPAEEARLLIKEIESFDRGMYAGPIGFFGGEESEFAVGIRSALVEKGLGALIYAGTGIVAGSDPSSEWNELDLKISQFTKSIEYEATTSLQAIN</sequence>
<evidence type="ECO:0000255" key="1"/>
<evidence type="ECO:0000269" key="2">
    <source>
    </source>
</evidence>
<evidence type="ECO:0000269" key="3">
    <source>
    </source>
</evidence>
<evidence type="ECO:0000269" key="4">
    <source>
    </source>
</evidence>
<evidence type="ECO:0000269" key="5">
    <source>
    </source>
</evidence>
<evidence type="ECO:0000269" key="6">
    <source>
    </source>
</evidence>
<evidence type="ECO:0000303" key="7">
    <source>
    </source>
</evidence>
<evidence type="ECO:0000305" key="8"/>
<evidence type="ECO:0007829" key="9">
    <source>
        <dbReference type="PDB" id="8W6V"/>
    </source>
</evidence>
<feature type="transit peptide" description="Chloroplast" evidence="1">
    <location>
        <begin position="1"/>
        <end position="45"/>
    </location>
</feature>
<feature type="chain" id="PRO_0000035791" description="Isochorismate synthase 1, chloroplastic">
    <location>
        <begin position="46"/>
        <end position="569"/>
    </location>
</feature>
<feature type="splice variant" id="VSP_034699" description="In isoform 2." evidence="8">
    <original>FTKSIEYEATTSLQAIN</original>
    <variation>VRAFVQKMFSDIMVLCYQNPNFYSLFCCCFCSSPSQLNMKQQHLYRRLIEERVTFVFDCFVCMGDKGFSQ</variation>
    <location>
        <begin position="553"/>
        <end position="569"/>
    </location>
</feature>
<feature type="sequence conflict" description="In Ref. 1." evidence="8" ref="1">
    <original>N</original>
    <variation>D</variation>
    <location>
        <position position="14"/>
    </location>
</feature>
<feature type="sequence conflict" description="In Ref. 1; AAC97926." evidence="8" ref="1">
    <original>S</original>
    <variation>P</variation>
    <location>
        <position position="195"/>
    </location>
</feature>
<feature type="sequence conflict" description="In Ref. 1; AAC97926." evidence="8" ref="1">
    <original>Q</original>
    <variation>R</variation>
    <location>
        <position position="373"/>
    </location>
</feature>
<feature type="helix" evidence="9">
    <location>
        <begin position="50"/>
        <end position="52"/>
    </location>
</feature>
<feature type="strand" evidence="9">
    <location>
        <begin position="62"/>
        <end position="66"/>
    </location>
</feature>
<feature type="strand" evidence="9">
    <location>
        <begin position="70"/>
        <end position="72"/>
    </location>
</feature>
<feature type="helix" evidence="9">
    <location>
        <begin position="73"/>
        <end position="89"/>
    </location>
</feature>
<feature type="strand" evidence="9">
    <location>
        <begin position="95"/>
        <end position="107"/>
    </location>
</feature>
<feature type="helix" evidence="9">
    <location>
        <begin position="111"/>
        <end position="117"/>
    </location>
</feature>
<feature type="strand" evidence="9">
    <location>
        <begin position="122"/>
        <end position="128"/>
    </location>
</feature>
<feature type="strand" evidence="9">
    <location>
        <begin position="161"/>
        <end position="168"/>
    </location>
</feature>
<feature type="strand" evidence="9">
    <location>
        <begin position="170"/>
        <end position="177"/>
    </location>
</feature>
<feature type="helix" evidence="9">
    <location>
        <begin position="181"/>
        <end position="188"/>
    </location>
</feature>
<feature type="strand" evidence="9">
    <location>
        <begin position="199"/>
        <end position="204"/>
    </location>
</feature>
<feature type="helix" evidence="9">
    <location>
        <begin position="214"/>
        <end position="219"/>
    </location>
</feature>
<feature type="strand" evidence="9">
    <location>
        <begin position="221"/>
        <end position="226"/>
    </location>
</feature>
<feature type="strand" evidence="9">
    <location>
        <begin position="228"/>
        <end position="236"/>
    </location>
</feature>
<feature type="strand" evidence="9">
    <location>
        <begin position="238"/>
        <end position="247"/>
    </location>
</feature>
<feature type="helix" evidence="9">
    <location>
        <begin position="248"/>
        <end position="250"/>
    </location>
</feature>
<feature type="helix" evidence="9">
    <location>
        <begin position="254"/>
        <end position="267"/>
    </location>
</feature>
<feature type="strand" evidence="9">
    <location>
        <begin position="284"/>
        <end position="291"/>
    </location>
</feature>
<feature type="helix" evidence="9">
    <location>
        <begin position="293"/>
        <end position="308"/>
    </location>
</feature>
<feature type="strand" evidence="9">
    <location>
        <begin position="309"/>
        <end position="311"/>
    </location>
</feature>
<feature type="strand" evidence="9">
    <location>
        <begin position="316"/>
        <end position="329"/>
    </location>
</feature>
<feature type="helix" evidence="9">
    <location>
        <begin position="333"/>
        <end position="343"/>
    </location>
</feature>
<feature type="strand" evidence="9">
    <location>
        <begin position="348"/>
        <end position="353"/>
    </location>
</feature>
<feature type="strand" evidence="9">
    <location>
        <begin position="359"/>
        <end position="364"/>
    </location>
</feature>
<feature type="strand" evidence="9">
    <location>
        <begin position="367"/>
        <end position="372"/>
    </location>
</feature>
<feature type="strand" evidence="9">
    <location>
        <begin position="375"/>
        <end position="386"/>
    </location>
</feature>
<feature type="helix" evidence="9">
    <location>
        <begin position="391"/>
        <end position="403"/>
    </location>
</feature>
<feature type="helix" evidence="9">
    <location>
        <begin position="405"/>
        <end position="423"/>
    </location>
</feature>
<feature type="strand" evidence="9">
    <location>
        <begin position="429"/>
        <end position="439"/>
    </location>
</feature>
<feature type="strand" evidence="9">
    <location>
        <begin position="441"/>
        <end position="453"/>
    </location>
</feature>
<feature type="helix" evidence="9">
    <location>
        <begin position="457"/>
        <end position="459"/>
    </location>
</feature>
<feature type="helix" evidence="9">
    <location>
        <begin position="460"/>
        <end position="467"/>
    </location>
</feature>
<feature type="turn" evidence="9">
    <location>
        <begin position="471"/>
        <end position="473"/>
    </location>
</feature>
<feature type="strand" evidence="9">
    <location>
        <begin position="474"/>
        <end position="477"/>
    </location>
</feature>
<feature type="helix" evidence="9">
    <location>
        <begin position="478"/>
        <end position="488"/>
    </location>
</feature>
<feature type="turn" evidence="9">
    <location>
        <begin position="494"/>
        <end position="497"/>
    </location>
</feature>
<feature type="strand" evidence="9">
    <location>
        <begin position="498"/>
        <end position="512"/>
    </location>
</feature>
<feature type="strand" evidence="9">
    <location>
        <begin position="515"/>
        <end position="520"/>
    </location>
</feature>
<feature type="turn" evidence="9">
    <location>
        <begin position="521"/>
        <end position="523"/>
    </location>
</feature>
<feature type="strand" evidence="9">
    <location>
        <begin position="524"/>
        <end position="534"/>
    </location>
</feature>
<feature type="helix" evidence="9">
    <location>
        <begin position="539"/>
        <end position="557"/>
    </location>
</feature>
<name>ICS1_ARATH</name>